<dbReference type="EMBL" id="AP005286">
    <property type="protein sequence ID" value="BAD19680.1"/>
    <property type="molecule type" value="Genomic_DNA"/>
</dbReference>
<dbReference type="EMBL" id="AP008208">
    <property type="protein sequence ID" value="BAF09321.1"/>
    <property type="molecule type" value="Genomic_DNA"/>
</dbReference>
<dbReference type="EMBL" id="AP014958">
    <property type="protein sequence ID" value="BAS79722.1"/>
    <property type="molecule type" value="Genomic_DNA"/>
</dbReference>
<dbReference type="EMBL" id="CM000139">
    <property type="protein sequence ID" value="EAZ23786.1"/>
    <property type="molecule type" value="Genomic_DNA"/>
</dbReference>
<dbReference type="EMBL" id="AK072083">
    <property type="protein sequence ID" value="BAG92814.1"/>
    <property type="molecule type" value="mRNA"/>
</dbReference>
<dbReference type="RefSeq" id="XP_015624699.1">
    <property type="nucleotide sequence ID" value="XM_015769213.1"/>
</dbReference>
<dbReference type="SMR" id="Q6K641"/>
<dbReference type="FunCoup" id="Q6K641">
    <property type="interactions" value="2166"/>
</dbReference>
<dbReference type="STRING" id="39947.Q6K641"/>
<dbReference type="iPTMnet" id="Q6K641"/>
<dbReference type="PaxDb" id="39947-Q6K641"/>
<dbReference type="EnsemblPlants" id="Os02t0611500-01">
    <property type="protein sequence ID" value="Os02t0611500-01"/>
    <property type="gene ID" value="Os02g0611500"/>
</dbReference>
<dbReference type="Gramene" id="Os02t0611500-01">
    <property type="protein sequence ID" value="Os02t0611500-01"/>
    <property type="gene ID" value="Os02g0611500"/>
</dbReference>
<dbReference type="KEGG" id="dosa:Os02g0611500"/>
<dbReference type="eggNOG" id="KOG0401">
    <property type="taxonomic scope" value="Eukaryota"/>
</dbReference>
<dbReference type="HOGENOM" id="CLU_021872_0_0_1"/>
<dbReference type="InParanoid" id="Q6K641"/>
<dbReference type="OMA" id="PSKPAME"/>
<dbReference type="OrthoDB" id="514777at2759"/>
<dbReference type="Proteomes" id="UP000000763">
    <property type="component" value="Chromosome 2"/>
</dbReference>
<dbReference type="Proteomes" id="UP000007752">
    <property type="component" value="Chromosome 2"/>
</dbReference>
<dbReference type="Proteomes" id="UP000059680">
    <property type="component" value="Chromosome 2"/>
</dbReference>
<dbReference type="GO" id="GO:0016281">
    <property type="term" value="C:eukaryotic translation initiation factor 4F complex"/>
    <property type="evidence" value="ECO:0000318"/>
    <property type="project" value="GO_Central"/>
</dbReference>
<dbReference type="GO" id="GO:0003729">
    <property type="term" value="F:mRNA binding"/>
    <property type="evidence" value="ECO:0000318"/>
    <property type="project" value="GO_Central"/>
</dbReference>
<dbReference type="GO" id="GO:0003743">
    <property type="term" value="F:translation initiation factor activity"/>
    <property type="evidence" value="ECO:0000318"/>
    <property type="project" value="GO_Central"/>
</dbReference>
<dbReference type="GO" id="GO:0006417">
    <property type="term" value="P:regulation of translation"/>
    <property type="evidence" value="ECO:0007669"/>
    <property type="project" value="UniProtKB-KW"/>
</dbReference>
<dbReference type="GO" id="GO:0006413">
    <property type="term" value="P:translational initiation"/>
    <property type="evidence" value="ECO:0000318"/>
    <property type="project" value="GO_Central"/>
</dbReference>
<dbReference type="FunFam" id="1.25.40.180:FF:000027">
    <property type="entry name" value="Eukaryotic translation initiation factor isoform 4G-2"/>
    <property type="match status" value="1"/>
</dbReference>
<dbReference type="FunFam" id="1.25.40.180:FF:000036">
    <property type="entry name" value="Eukaryotic translation initiation factor isoform 4G-2"/>
    <property type="match status" value="1"/>
</dbReference>
<dbReference type="Gene3D" id="1.25.40.180">
    <property type="match status" value="2"/>
</dbReference>
<dbReference type="InterPro" id="IPR016024">
    <property type="entry name" value="ARM-type_fold"/>
</dbReference>
<dbReference type="InterPro" id="IPR003891">
    <property type="entry name" value="Initiation_fac_eIF4g_MI"/>
</dbReference>
<dbReference type="InterPro" id="IPR003890">
    <property type="entry name" value="MIF4G-like_typ-3"/>
</dbReference>
<dbReference type="PANTHER" id="PTHR23253">
    <property type="entry name" value="EUKARYOTIC TRANSLATION INITIATION FACTOR 4 GAMMA"/>
    <property type="match status" value="1"/>
</dbReference>
<dbReference type="PANTHER" id="PTHR23253:SF53">
    <property type="entry name" value="EUKARYOTIC TRANSLATION INITIATION FACTOR ISOFORM 4G-1"/>
    <property type="match status" value="1"/>
</dbReference>
<dbReference type="Pfam" id="PF02847">
    <property type="entry name" value="MA3"/>
    <property type="match status" value="1"/>
</dbReference>
<dbReference type="Pfam" id="PF02854">
    <property type="entry name" value="MIF4G"/>
    <property type="match status" value="1"/>
</dbReference>
<dbReference type="SMART" id="SM00544">
    <property type="entry name" value="MA3"/>
    <property type="match status" value="1"/>
</dbReference>
<dbReference type="SMART" id="SM00543">
    <property type="entry name" value="MIF4G"/>
    <property type="match status" value="1"/>
</dbReference>
<dbReference type="SUPFAM" id="SSF48371">
    <property type="entry name" value="ARM repeat"/>
    <property type="match status" value="2"/>
</dbReference>
<dbReference type="PROSITE" id="PS51366">
    <property type="entry name" value="MI"/>
    <property type="match status" value="1"/>
</dbReference>
<reference key="1">
    <citation type="journal article" date="2005" name="Nature">
        <title>The map-based sequence of the rice genome.</title>
        <authorList>
            <consortium name="International rice genome sequencing project (IRGSP)"/>
        </authorList>
    </citation>
    <scope>NUCLEOTIDE SEQUENCE [LARGE SCALE GENOMIC DNA]</scope>
    <source>
        <strain>cv. Nipponbare</strain>
    </source>
</reference>
<reference key="2">
    <citation type="journal article" date="2008" name="Nucleic Acids Res.">
        <title>The rice annotation project database (RAP-DB): 2008 update.</title>
        <authorList>
            <consortium name="The rice annotation project (RAP)"/>
        </authorList>
    </citation>
    <scope>GENOME REANNOTATION</scope>
    <source>
        <strain>cv. Nipponbare</strain>
    </source>
</reference>
<reference key="3">
    <citation type="journal article" date="2013" name="Rice">
        <title>Improvement of the Oryza sativa Nipponbare reference genome using next generation sequence and optical map data.</title>
        <authorList>
            <person name="Kawahara Y."/>
            <person name="de la Bastide M."/>
            <person name="Hamilton J.P."/>
            <person name="Kanamori H."/>
            <person name="McCombie W.R."/>
            <person name="Ouyang S."/>
            <person name="Schwartz D.C."/>
            <person name="Tanaka T."/>
            <person name="Wu J."/>
            <person name="Zhou S."/>
            <person name="Childs K.L."/>
            <person name="Davidson R.M."/>
            <person name="Lin H."/>
            <person name="Quesada-Ocampo L."/>
            <person name="Vaillancourt B."/>
            <person name="Sakai H."/>
            <person name="Lee S.S."/>
            <person name="Kim J."/>
            <person name="Numa H."/>
            <person name="Itoh T."/>
            <person name="Buell C.R."/>
            <person name="Matsumoto T."/>
        </authorList>
    </citation>
    <scope>GENOME REANNOTATION</scope>
    <source>
        <strain>cv. Nipponbare</strain>
    </source>
</reference>
<reference key="4">
    <citation type="journal article" date="2005" name="PLoS Biol.">
        <title>The genomes of Oryza sativa: a history of duplications.</title>
        <authorList>
            <person name="Yu J."/>
            <person name="Wang J."/>
            <person name="Lin W."/>
            <person name="Li S."/>
            <person name="Li H."/>
            <person name="Zhou J."/>
            <person name="Ni P."/>
            <person name="Dong W."/>
            <person name="Hu S."/>
            <person name="Zeng C."/>
            <person name="Zhang J."/>
            <person name="Zhang Y."/>
            <person name="Li R."/>
            <person name="Xu Z."/>
            <person name="Li S."/>
            <person name="Li X."/>
            <person name="Zheng H."/>
            <person name="Cong L."/>
            <person name="Lin L."/>
            <person name="Yin J."/>
            <person name="Geng J."/>
            <person name="Li G."/>
            <person name="Shi J."/>
            <person name="Liu J."/>
            <person name="Lv H."/>
            <person name="Li J."/>
            <person name="Wang J."/>
            <person name="Deng Y."/>
            <person name="Ran L."/>
            <person name="Shi X."/>
            <person name="Wang X."/>
            <person name="Wu Q."/>
            <person name="Li C."/>
            <person name="Ren X."/>
            <person name="Wang J."/>
            <person name="Wang X."/>
            <person name="Li D."/>
            <person name="Liu D."/>
            <person name="Zhang X."/>
            <person name="Ji Z."/>
            <person name="Zhao W."/>
            <person name="Sun Y."/>
            <person name="Zhang Z."/>
            <person name="Bao J."/>
            <person name="Han Y."/>
            <person name="Dong L."/>
            <person name="Ji J."/>
            <person name="Chen P."/>
            <person name="Wu S."/>
            <person name="Liu J."/>
            <person name="Xiao Y."/>
            <person name="Bu D."/>
            <person name="Tan J."/>
            <person name="Yang L."/>
            <person name="Ye C."/>
            <person name="Zhang J."/>
            <person name="Xu J."/>
            <person name="Zhou Y."/>
            <person name="Yu Y."/>
            <person name="Zhang B."/>
            <person name="Zhuang S."/>
            <person name="Wei H."/>
            <person name="Liu B."/>
            <person name="Lei M."/>
            <person name="Yu H."/>
            <person name="Li Y."/>
            <person name="Xu H."/>
            <person name="Wei S."/>
            <person name="He X."/>
            <person name="Fang L."/>
            <person name="Zhang Z."/>
            <person name="Zhang Y."/>
            <person name="Huang X."/>
            <person name="Su Z."/>
            <person name="Tong W."/>
            <person name="Li J."/>
            <person name="Tong Z."/>
            <person name="Li S."/>
            <person name="Ye J."/>
            <person name="Wang L."/>
            <person name="Fang L."/>
            <person name="Lei T."/>
            <person name="Chen C.-S."/>
            <person name="Chen H.-C."/>
            <person name="Xu Z."/>
            <person name="Li H."/>
            <person name="Huang H."/>
            <person name="Zhang F."/>
            <person name="Xu H."/>
            <person name="Li N."/>
            <person name="Zhao C."/>
            <person name="Li S."/>
            <person name="Dong L."/>
            <person name="Huang Y."/>
            <person name="Li L."/>
            <person name="Xi Y."/>
            <person name="Qi Q."/>
            <person name="Li W."/>
            <person name="Zhang B."/>
            <person name="Hu W."/>
            <person name="Zhang Y."/>
            <person name="Tian X."/>
            <person name="Jiao Y."/>
            <person name="Liang X."/>
            <person name="Jin J."/>
            <person name="Gao L."/>
            <person name="Zheng W."/>
            <person name="Hao B."/>
            <person name="Liu S.-M."/>
            <person name="Wang W."/>
            <person name="Yuan L."/>
            <person name="Cao M."/>
            <person name="McDermott J."/>
            <person name="Samudrala R."/>
            <person name="Wang J."/>
            <person name="Wong G.K.-S."/>
            <person name="Yang H."/>
        </authorList>
    </citation>
    <scope>NUCLEOTIDE SEQUENCE [LARGE SCALE GENOMIC DNA]</scope>
    <source>
        <strain>cv. Nipponbare</strain>
    </source>
</reference>
<reference key="5">
    <citation type="journal article" date="2003" name="Science">
        <title>Collection, mapping, and annotation of over 28,000 cDNA clones from japonica rice.</title>
        <authorList>
            <consortium name="The rice full-length cDNA consortium"/>
        </authorList>
    </citation>
    <scope>NUCLEOTIDE SEQUENCE [LARGE SCALE MRNA]</scope>
    <source>
        <strain>cv. Nipponbare</strain>
    </source>
</reference>
<reference key="6">
    <citation type="journal article" date="2007" name="Theor. Appl. Genet.">
        <title>Evaluation of genes from eIF4E and eIF4G multigenic families as potential candidates for partial resistance QTLs to Rice yellow mottle virus in rice.</title>
        <authorList>
            <person name="Boisnard A."/>
            <person name="Albar L."/>
            <person name="Thiemele D."/>
            <person name="Rondeau M."/>
            <person name="Ghesquiere A."/>
        </authorList>
    </citation>
    <scope>GENE FAMILY</scope>
</reference>
<name>IF4G2_ORYSJ</name>
<proteinExistence type="evidence at transcript level"/>
<protein>
    <recommendedName>
        <fullName>Eukaryotic translation initiation factor isoform 4G-2</fullName>
        <shortName>eIF(iso)-4G-2</shortName>
        <shortName>eIF(iso)4G-2</shortName>
    </recommendedName>
    <alternativeName>
        <fullName>Eukaryotic initiation factor iso-4F subunit p82</fullName>
        <shortName>eIF-(iso)4F p82 subunit</shortName>
    </alternativeName>
</protein>
<feature type="chain" id="PRO_0000420546" description="Eukaryotic translation initiation factor isoform 4G-2">
    <location>
        <begin position="1"/>
        <end position="780"/>
    </location>
</feature>
<feature type="domain" description="MIF4G" evidence="2">
    <location>
        <begin position="208"/>
        <end position="432"/>
    </location>
</feature>
<feature type="domain" description="MI" evidence="2">
    <location>
        <begin position="612"/>
        <end position="734"/>
    </location>
</feature>
<feature type="region of interest" description="Disordered" evidence="3">
    <location>
        <begin position="457"/>
        <end position="482"/>
    </location>
</feature>
<feature type="region of interest" description="Disordered" evidence="3">
    <location>
        <begin position="506"/>
        <end position="549"/>
    </location>
</feature>
<feature type="compositionally biased region" description="Basic and acidic residues" evidence="3">
    <location>
        <begin position="517"/>
        <end position="529"/>
    </location>
</feature>
<feature type="compositionally biased region" description="Polar residues" evidence="3">
    <location>
        <begin position="533"/>
        <end position="548"/>
    </location>
</feature>
<comment type="function">
    <text evidence="1">Plays a role in the accumulation of a sobemovirus (RYMV) during viral infection.</text>
</comment>
<comment type="subunit">
    <text>EIF4F is a multi-subunit complex, the composition of which varies with external and internal environmental conditions. It is composed of at least EIF4A, EIF4E and EIF4G. In higher plants two isoforms of EIF4F have been identified, named isoform EIF4F and isoform EIF(iso)4F. Isoform EIF4F has subunits p220 and p26, whereas isoform EIF(iso)4F has subunits p82 and p28.</text>
</comment>
<comment type="similarity">
    <text evidence="4">Belongs to the eukaryotic initiation factor 4G family.</text>
</comment>
<sequence length="780" mass="85989">MTQADQAVISLRPGGGGGIGGPRAGRLFPFGASTGSLDFLRPRGGASSGFAAKLGDLRFEPLERVRYTRDQLVELHEIIDIPENILKLKQDIDIELHGEDEPWINNDSSVQTQSYNRYAETDNRDWRSRIEQPVQTPAIGGEEKSWDKFREAKESYISSGKQDQFNNQDKLSSQFSAKAQVGPAPALVKAEVPWSIQRGNLSNKERVLKTVKGILNKLTPEKFDLLKGQLIEAGITTADILKDVISLIFEKAVLEPTFCPMYAQLCFDLNEKLPSFPSEEPGGKEITFKRVLLNNCQEAFEGADNLRSEVNKLTGLDQEMERRDKERLVKLRTLGNIRLVGELLKQKMVPEKIVHHIVQELLGSESNRCPAEENVEAICQFFNTIGKQLDENPKSRRFNDVYFNRLKDLTTNSQLASRLRFMARDVLDLRSNQWVPRREEMKAKKISEIHREAENNLGLRPGSTASIRTGRTGTGGGGPLSPGAFSMNQPGIVGMLPGMPGARKMPGMPGLGSDDWEVPHSRSKPRADPVRNLTPSLANKPSPNNSRLLPQGSAALISGKTSALVGSGGPLSHGLVVTPSQTTGPPKSLIPAPSVDPIVEQPAAAPKPSSTELQKKTISLLKEYFHILLLHEAQQCIEELKSPDYYPEVVKEAINLALDKGTNSIDPLLRLLEHLYNKNVFKATDLETGCLLYSSLLDELAIDLPKAPVHFGEVIGRLVLSHCLSIEVVEDTLKKIEDSFFRAAVFEAMMKIMKANPSGQAILGSHVAKIDACSKLLSSE</sequence>
<gene>
    <name type="ordered locus">Os02g0611500</name>
    <name type="ordered locus">LOC_Os02g39840</name>
    <name type="ORF">OJ1004_A05.11</name>
    <name type="ORF">OsJ_07496</name>
</gene>
<keyword id="KW-0396">Initiation factor</keyword>
<keyword id="KW-0648">Protein biosynthesis</keyword>
<keyword id="KW-1185">Reference proteome</keyword>
<keyword id="KW-0810">Translation regulation</keyword>
<organism>
    <name type="scientific">Oryza sativa subsp. japonica</name>
    <name type="common">Rice</name>
    <dbReference type="NCBI Taxonomy" id="39947"/>
    <lineage>
        <taxon>Eukaryota</taxon>
        <taxon>Viridiplantae</taxon>
        <taxon>Streptophyta</taxon>
        <taxon>Embryophyta</taxon>
        <taxon>Tracheophyta</taxon>
        <taxon>Spermatophyta</taxon>
        <taxon>Magnoliopsida</taxon>
        <taxon>Liliopsida</taxon>
        <taxon>Poales</taxon>
        <taxon>Poaceae</taxon>
        <taxon>BOP clade</taxon>
        <taxon>Oryzoideae</taxon>
        <taxon>Oryzeae</taxon>
        <taxon>Oryzinae</taxon>
        <taxon>Oryza</taxon>
        <taxon>Oryza sativa</taxon>
    </lineage>
</organism>
<accession>Q6K641</accession>
<accession>A0A0P0VLJ5</accession>
<evidence type="ECO:0000250" key="1"/>
<evidence type="ECO:0000255" key="2">
    <source>
        <dbReference type="PROSITE-ProRule" id="PRU00698"/>
    </source>
</evidence>
<evidence type="ECO:0000256" key="3">
    <source>
        <dbReference type="SAM" id="MobiDB-lite"/>
    </source>
</evidence>
<evidence type="ECO:0000305" key="4"/>